<accession>O74333</accession>
<proteinExistence type="inferred from homology"/>
<dbReference type="EMBL" id="CU329671">
    <property type="protein sequence ID" value="CAA20061.1"/>
    <property type="molecule type" value="Genomic_DNA"/>
</dbReference>
<dbReference type="PIR" id="T39529">
    <property type="entry name" value="T39529"/>
</dbReference>
<dbReference type="RefSeq" id="NP_595217.1">
    <property type="nucleotide sequence ID" value="NM_001021124.2"/>
</dbReference>
<dbReference type="SMR" id="O74333"/>
<dbReference type="BioGRID" id="276279">
    <property type="interactions" value="5"/>
</dbReference>
<dbReference type="FunCoup" id="O74333">
    <property type="interactions" value="7"/>
</dbReference>
<dbReference type="STRING" id="284812.O74333"/>
<dbReference type="TCDB" id="9.A.27.1.3">
    <property type="family name" value="the non-classical protein exporter (ncpe) family"/>
</dbReference>
<dbReference type="iPTMnet" id="O74333"/>
<dbReference type="SwissPalm" id="O74333"/>
<dbReference type="PaxDb" id="4896-SPBC1685.13.1"/>
<dbReference type="EnsemblFungi" id="SPBC1685.13.1">
    <property type="protein sequence ID" value="SPBC1685.13.1:pep"/>
    <property type="gene ID" value="SPBC1685.13"/>
</dbReference>
<dbReference type="GeneID" id="2539727"/>
<dbReference type="KEGG" id="spo:2539727"/>
<dbReference type="PomBase" id="SPBC1685.13">
    <property type="gene designation" value="fhn1"/>
</dbReference>
<dbReference type="VEuPathDB" id="FungiDB:SPBC1685.13"/>
<dbReference type="eggNOG" id="ENOG502RZW2">
    <property type="taxonomic scope" value="Eukaryota"/>
</dbReference>
<dbReference type="HOGENOM" id="CLU_098356_1_0_1"/>
<dbReference type="InParanoid" id="O74333"/>
<dbReference type="OMA" id="NSRINYC"/>
<dbReference type="PhylomeDB" id="O74333"/>
<dbReference type="PRO" id="PR:O74333"/>
<dbReference type="Proteomes" id="UP000002485">
    <property type="component" value="Chromosome II"/>
</dbReference>
<dbReference type="GO" id="GO:0032126">
    <property type="term" value="C:eisosome"/>
    <property type="evidence" value="ECO:0000314"/>
    <property type="project" value="PomBase"/>
</dbReference>
<dbReference type="GO" id="GO:0000139">
    <property type="term" value="C:Golgi membrane"/>
    <property type="evidence" value="ECO:0007669"/>
    <property type="project" value="UniProtKB-SubCell"/>
</dbReference>
<dbReference type="GO" id="GO:0035838">
    <property type="term" value="C:growing cell tip"/>
    <property type="evidence" value="ECO:0000314"/>
    <property type="project" value="PomBase"/>
</dbReference>
<dbReference type="GO" id="GO:0005886">
    <property type="term" value="C:plasma membrane"/>
    <property type="evidence" value="ECO:0000316"/>
    <property type="project" value="PomBase"/>
</dbReference>
<dbReference type="GO" id="GO:0070941">
    <property type="term" value="P:eisosome assembly"/>
    <property type="evidence" value="ECO:0000315"/>
    <property type="project" value="PomBase"/>
</dbReference>
<dbReference type="GO" id="GO:0007009">
    <property type="term" value="P:plasma membrane organization"/>
    <property type="evidence" value="ECO:0000316"/>
    <property type="project" value="PomBase"/>
</dbReference>
<dbReference type="GO" id="GO:0072659">
    <property type="term" value="P:protein localization to plasma membrane"/>
    <property type="evidence" value="ECO:0000318"/>
    <property type="project" value="GO_Central"/>
</dbReference>
<dbReference type="GO" id="GO:0015031">
    <property type="term" value="P:protein transport"/>
    <property type="evidence" value="ECO:0007669"/>
    <property type="project" value="UniProtKB-KW"/>
</dbReference>
<dbReference type="InterPro" id="IPR008253">
    <property type="entry name" value="Marvel"/>
</dbReference>
<dbReference type="InterPro" id="IPR052649">
    <property type="entry name" value="NCE102-like"/>
</dbReference>
<dbReference type="PANTHER" id="PTHR28165">
    <property type="entry name" value="NON-CLASSICAL EXPORT PROTEIN 2-RELATED"/>
    <property type="match status" value="1"/>
</dbReference>
<dbReference type="PANTHER" id="PTHR28165:SF1">
    <property type="entry name" value="NON-CLASSICAL EXPORT PROTEIN 2-RELATED"/>
    <property type="match status" value="1"/>
</dbReference>
<dbReference type="Pfam" id="PF01284">
    <property type="entry name" value="MARVEL"/>
    <property type="match status" value="1"/>
</dbReference>
<reference key="1">
    <citation type="journal article" date="2002" name="Nature">
        <title>The genome sequence of Schizosaccharomyces pombe.</title>
        <authorList>
            <person name="Wood V."/>
            <person name="Gwilliam R."/>
            <person name="Rajandream M.A."/>
            <person name="Lyne M.H."/>
            <person name="Lyne R."/>
            <person name="Stewart A."/>
            <person name="Sgouros J.G."/>
            <person name="Peat N."/>
            <person name="Hayles J."/>
            <person name="Baker S.G."/>
            <person name="Basham D."/>
            <person name="Bowman S."/>
            <person name="Brooks K."/>
            <person name="Brown D."/>
            <person name="Brown S."/>
            <person name="Chillingworth T."/>
            <person name="Churcher C.M."/>
            <person name="Collins M."/>
            <person name="Connor R."/>
            <person name="Cronin A."/>
            <person name="Davis P."/>
            <person name="Feltwell T."/>
            <person name="Fraser A."/>
            <person name="Gentles S."/>
            <person name="Goble A."/>
            <person name="Hamlin N."/>
            <person name="Harris D.E."/>
            <person name="Hidalgo J."/>
            <person name="Hodgson G."/>
            <person name="Holroyd S."/>
            <person name="Hornsby T."/>
            <person name="Howarth S."/>
            <person name="Huckle E.J."/>
            <person name="Hunt S."/>
            <person name="Jagels K."/>
            <person name="James K.D."/>
            <person name="Jones L."/>
            <person name="Jones M."/>
            <person name="Leather S."/>
            <person name="McDonald S."/>
            <person name="McLean J."/>
            <person name="Mooney P."/>
            <person name="Moule S."/>
            <person name="Mungall K.L."/>
            <person name="Murphy L.D."/>
            <person name="Niblett D."/>
            <person name="Odell C."/>
            <person name="Oliver K."/>
            <person name="O'Neil S."/>
            <person name="Pearson D."/>
            <person name="Quail M.A."/>
            <person name="Rabbinowitsch E."/>
            <person name="Rutherford K.M."/>
            <person name="Rutter S."/>
            <person name="Saunders D."/>
            <person name="Seeger K."/>
            <person name="Sharp S."/>
            <person name="Skelton J."/>
            <person name="Simmonds M.N."/>
            <person name="Squares R."/>
            <person name="Squares S."/>
            <person name="Stevens K."/>
            <person name="Taylor K."/>
            <person name="Taylor R.G."/>
            <person name="Tivey A."/>
            <person name="Walsh S.V."/>
            <person name="Warren T."/>
            <person name="Whitehead S."/>
            <person name="Woodward J.R."/>
            <person name="Volckaert G."/>
            <person name="Aert R."/>
            <person name="Robben J."/>
            <person name="Grymonprez B."/>
            <person name="Weltjens I."/>
            <person name="Vanstreels E."/>
            <person name="Rieger M."/>
            <person name="Schaefer M."/>
            <person name="Mueller-Auer S."/>
            <person name="Gabel C."/>
            <person name="Fuchs M."/>
            <person name="Duesterhoeft A."/>
            <person name="Fritzc C."/>
            <person name="Holzer E."/>
            <person name="Moestl D."/>
            <person name="Hilbert H."/>
            <person name="Borzym K."/>
            <person name="Langer I."/>
            <person name="Beck A."/>
            <person name="Lehrach H."/>
            <person name="Reinhardt R."/>
            <person name="Pohl T.M."/>
            <person name="Eger P."/>
            <person name="Zimmermann W."/>
            <person name="Wedler H."/>
            <person name="Wambutt R."/>
            <person name="Purnelle B."/>
            <person name="Goffeau A."/>
            <person name="Cadieu E."/>
            <person name="Dreano S."/>
            <person name="Gloux S."/>
            <person name="Lelaure V."/>
            <person name="Mottier S."/>
            <person name="Galibert F."/>
            <person name="Aves S.J."/>
            <person name="Xiang Z."/>
            <person name="Hunt C."/>
            <person name="Moore K."/>
            <person name="Hurst S.M."/>
            <person name="Lucas M."/>
            <person name="Rochet M."/>
            <person name="Gaillardin C."/>
            <person name="Tallada V.A."/>
            <person name="Garzon A."/>
            <person name="Thode G."/>
            <person name="Daga R.R."/>
            <person name="Cruzado L."/>
            <person name="Jimenez J."/>
            <person name="Sanchez M."/>
            <person name="del Rey F."/>
            <person name="Benito J."/>
            <person name="Dominguez A."/>
            <person name="Revuelta J.L."/>
            <person name="Moreno S."/>
            <person name="Armstrong J."/>
            <person name="Forsburg S.L."/>
            <person name="Cerutti L."/>
            <person name="Lowe T."/>
            <person name="McCombie W.R."/>
            <person name="Paulsen I."/>
            <person name="Potashkin J."/>
            <person name="Shpakovski G.V."/>
            <person name="Ussery D."/>
            <person name="Barrell B.G."/>
            <person name="Nurse P."/>
        </authorList>
    </citation>
    <scope>NUCLEOTIDE SEQUENCE [LARGE SCALE GENOMIC DNA]</scope>
    <source>
        <strain>972 / ATCC 24843</strain>
    </source>
</reference>
<reference key="2">
    <citation type="journal article" date="2006" name="Nat. Biotechnol.">
        <title>ORFeome cloning and global analysis of protein localization in the fission yeast Schizosaccharomyces pombe.</title>
        <authorList>
            <person name="Matsuyama A."/>
            <person name="Arai R."/>
            <person name="Yashiroda Y."/>
            <person name="Shirai A."/>
            <person name="Kamata A."/>
            <person name="Sekido S."/>
            <person name="Kobayashi Y."/>
            <person name="Hashimoto A."/>
            <person name="Hamamoto M."/>
            <person name="Hiraoka Y."/>
            <person name="Horinouchi S."/>
            <person name="Yoshida M."/>
        </authorList>
    </citation>
    <scope>SUBCELLULAR LOCATION [LARGE SCALE ANALYSIS]</scope>
</reference>
<reference key="3">
    <citation type="journal article" date="2010" name="Eukaryot. Cell">
        <title>C terminus of Nce102 determines the structure and function of microdomains in the Saccharomyces cerevisiae plasma membrane.</title>
        <authorList>
            <person name="Loibl M."/>
            <person name="Grossmann G."/>
            <person name="Stradalova V."/>
            <person name="Klingl A."/>
            <person name="Rachel R."/>
            <person name="Tanner W."/>
            <person name="Malinsky J."/>
            <person name="Opekarova M."/>
        </authorList>
    </citation>
    <scope>FUNCTION</scope>
</reference>
<comment type="function">
    <text evidence="5">Involved in membrane organization and might act as a sensor of sphingolipids that regulates plasma membrane function. Involved in a novel pathway of export of proteins that lack a cleavable signal sequence.</text>
</comment>
<comment type="subcellular location">
    <subcellularLocation>
        <location evidence="4">Cytoplasm</location>
    </subcellularLocation>
    <subcellularLocation>
        <location evidence="4">Golgi apparatus membrane</location>
        <topology evidence="4">Multi-pass membrane protein</topology>
    </subcellularLocation>
    <subcellularLocation>
        <location evidence="1">Cell membrane</location>
        <topology evidence="1">Multi-pass membrane protein</topology>
    </subcellularLocation>
</comment>
<comment type="similarity">
    <text evidence="6">Belongs to the NCE102 family.</text>
</comment>
<evidence type="ECO:0000250" key="1"/>
<evidence type="ECO:0000255" key="2"/>
<evidence type="ECO:0000256" key="3">
    <source>
        <dbReference type="SAM" id="MobiDB-lite"/>
    </source>
</evidence>
<evidence type="ECO:0000269" key="4">
    <source>
    </source>
</evidence>
<evidence type="ECO:0000269" key="5">
    <source>
    </source>
</evidence>
<evidence type="ECO:0000305" key="6"/>
<keyword id="KW-1003">Cell membrane</keyword>
<keyword id="KW-0963">Cytoplasm</keyword>
<keyword id="KW-0333">Golgi apparatus</keyword>
<keyword id="KW-0472">Membrane</keyword>
<keyword id="KW-0653">Protein transport</keyword>
<keyword id="KW-1185">Reference proteome</keyword>
<keyword id="KW-0812">Transmembrane</keyword>
<keyword id="KW-1133">Transmembrane helix</keyword>
<keyword id="KW-0813">Transport</keyword>
<organism>
    <name type="scientific">Schizosaccharomyces pombe (strain 972 / ATCC 24843)</name>
    <name type="common">Fission yeast</name>
    <dbReference type="NCBI Taxonomy" id="284812"/>
    <lineage>
        <taxon>Eukaryota</taxon>
        <taxon>Fungi</taxon>
        <taxon>Dikarya</taxon>
        <taxon>Ascomycota</taxon>
        <taxon>Taphrinomycotina</taxon>
        <taxon>Schizosaccharomycetes</taxon>
        <taxon>Schizosaccharomycetales</taxon>
        <taxon>Schizosaccharomycetaceae</taxon>
        <taxon>Schizosaccharomyces</taxon>
    </lineage>
</organism>
<protein>
    <recommendedName>
        <fullName>Non-classical export protein 2 homolog</fullName>
    </recommendedName>
</protein>
<feature type="chain" id="PRO_0000350998" description="Non-classical export protein 2 homolog">
    <location>
        <begin position="1"/>
        <end position="183"/>
    </location>
</feature>
<feature type="topological domain" description="Cytoplasmic" evidence="2">
    <location>
        <begin position="1"/>
        <end position="8"/>
    </location>
</feature>
<feature type="transmembrane region" description="Helical" evidence="2">
    <location>
        <begin position="9"/>
        <end position="29"/>
    </location>
</feature>
<feature type="topological domain" description="Extracellular" evidence="2">
    <location>
        <begin position="30"/>
        <end position="44"/>
    </location>
</feature>
<feature type="transmembrane region" description="Helical" evidence="2">
    <location>
        <begin position="45"/>
        <end position="65"/>
    </location>
</feature>
<feature type="topological domain" description="Cytoplasmic" evidence="2">
    <location>
        <begin position="66"/>
        <end position="75"/>
    </location>
</feature>
<feature type="transmembrane region" description="Helical" evidence="2">
    <location>
        <begin position="76"/>
        <end position="96"/>
    </location>
</feature>
<feature type="topological domain" description="Extracellular" evidence="2">
    <location>
        <begin position="97"/>
        <end position="131"/>
    </location>
</feature>
<feature type="transmembrane region" description="Helical" evidence="2">
    <location>
        <begin position="132"/>
        <end position="152"/>
    </location>
</feature>
<feature type="topological domain" description="Cytoplasmic" evidence="2">
    <location>
        <begin position="153"/>
        <end position="183"/>
    </location>
</feature>
<feature type="region of interest" description="Disordered" evidence="3">
    <location>
        <begin position="163"/>
        <end position="183"/>
    </location>
</feature>
<sequence length="183" mass="20273">MVGIRQYGVFTWVFRTFQLAIDTIVLALASALVNQQTSGGSPGKINFSVAVGSFAILTFFLTAVGRFLPTILGNPWLIAFYDFVNWVFALTGGCCIAVAIRVHACDNQKYLDRNHYTQGSMRRCQELKALCFFLWFMFGLYVASFIVQIFIAKNDTPNYTFRGRGRGKGSGPAVAPRPVMSAV</sequence>
<name>NCE2_SCHPO</name>
<gene>
    <name type="primary">fhn1</name>
    <name type="ORF">SPBC1685.13</name>
</gene>